<reference key="1">
    <citation type="submission" date="2008-02" db="EMBL/GenBank/DDBJ databases">
        <title>Complete sequence of Escherichia coli C str. ATCC 8739.</title>
        <authorList>
            <person name="Copeland A."/>
            <person name="Lucas S."/>
            <person name="Lapidus A."/>
            <person name="Glavina del Rio T."/>
            <person name="Dalin E."/>
            <person name="Tice H."/>
            <person name="Bruce D."/>
            <person name="Goodwin L."/>
            <person name="Pitluck S."/>
            <person name="Kiss H."/>
            <person name="Brettin T."/>
            <person name="Detter J.C."/>
            <person name="Han C."/>
            <person name="Kuske C.R."/>
            <person name="Schmutz J."/>
            <person name="Larimer F."/>
            <person name="Land M."/>
            <person name="Hauser L."/>
            <person name="Kyrpides N."/>
            <person name="Mikhailova N."/>
            <person name="Ingram L."/>
            <person name="Richardson P."/>
        </authorList>
    </citation>
    <scope>NUCLEOTIDE SEQUENCE [LARGE SCALE GENOMIC DNA]</scope>
    <source>
        <strain>ATCC 8739 / DSM 1576 / NBRC 3972 / NCIMB 8545 / WDCM 00012 / Crooks</strain>
    </source>
</reference>
<gene>
    <name evidence="1" type="primary">glmM</name>
    <name type="ordered locus">EcolC_0524</name>
</gene>
<protein>
    <recommendedName>
        <fullName evidence="1">Phosphoglucosamine mutase</fullName>
        <ecNumber evidence="1">5.4.2.10</ecNumber>
    </recommendedName>
</protein>
<accession>B1IQU7</accession>
<keyword id="KW-0413">Isomerase</keyword>
<keyword id="KW-0460">Magnesium</keyword>
<keyword id="KW-0479">Metal-binding</keyword>
<keyword id="KW-0597">Phosphoprotein</keyword>
<evidence type="ECO:0000255" key="1">
    <source>
        <dbReference type="HAMAP-Rule" id="MF_01554"/>
    </source>
</evidence>
<comment type="function">
    <text evidence="1">Catalyzes the conversion of glucosamine-6-phosphate to glucosamine-1-phosphate.</text>
</comment>
<comment type="catalytic activity">
    <reaction evidence="1">
        <text>alpha-D-glucosamine 1-phosphate = D-glucosamine 6-phosphate</text>
        <dbReference type="Rhea" id="RHEA:23424"/>
        <dbReference type="ChEBI" id="CHEBI:58516"/>
        <dbReference type="ChEBI" id="CHEBI:58725"/>
        <dbReference type="EC" id="5.4.2.10"/>
    </reaction>
</comment>
<comment type="cofactor">
    <cofactor evidence="1">
        <name>Mg(2+)</name>
        <dbReference type="ChEBI" id="CHEBI:18420"/>
    </cofactor>
    <text evidence="1">Binds 1 Mg(2+) ion per subunit.</text>
</comment>
<comment type="PTM">
    <text evidence="1">Activated by phosphorylation.</text>
</comment>
<comment type="similarity">
    <text evidence="1">Belongs to the phosphohexose mutase family.</text>
</comment>
<proteinExistence type="inferred from homology"/>
<feature type="chain" id="PRO_1000087766" description="Phosphoglucosamine mutase">
    <location>
        <begin position="1"/>
        <end position="445"/>
    </location>
</feature>
<feature type="active site" description="Phosphoserine intermediate" evidence="1">
    <location>
        <position position="102"/>
    </location>
</feature>
<feature type="binding site" description="via phosphate group" evidence="1">
    <location>
        <position position="102"/>
    </location>
    <ligand>
        <name>Mg(2+)</name>
        <dbReference type="ChEBI" id="CHEBI:18420"/>
    </ligand>
</feature>
<feature type="binding site" evidence="1">
    <location>
        <position position="241"/>
    </location>
    <ligand>
        <name>Mg(2+)</name>
        <dbReference type="ChEBI" id="CHEBI:18420"/>
    </ligand>
</feature>
<feature type="binding site" evidence="1">
    <location>
        <position position="243"/>
    </location>
    <ligand>
        <name>Mg(2+)</name>
        <dbReference type="ChEBI" id="CHEBI:18420"/>
    </ligand>
</feature>
<feature type="binding site" evidence="1">
    <location>
        <position position="245"/>
    </location>
    <ligand>
        <name>Mg(2+)</name>
        <dbReference type="ChEBI" id="CHEBI:18420"/>
    </ligand>
</feature>
<feature type="modified residue" description="Phosphoserine" evidence="1">
    <location>
        <position position="102"/>
    </location>
</feature>
<dbReference type="EC" id="5.4.2.10" evidence="1"/>
<dbReference type="EMBL" id="CP000946">
    <property type="protein sequence ID" value="ACA76201.1"/>
    <property type="molecule type" value="Genomic_DNA"/>
</dbReference>
<dbReference type="RefSeq" id="WP_000071134.1">
    <property type="nucleotide sequence ID" value="NZ_MTFT01000027.1"/>
</dbReference>
<dbReference type="SMR" id="B1IQU7"/>
<dbReference type="GeneID" id="75206032"/>
<dbReference type="KEGG" id="ecl:EcolC_0524"/>
<dbReference type="HOGENOM" id="CLU_016950_7_0_6"/>
<dbReference type="GO" id="GO:0005829">
    <property type="term" value="C:cytosol"/>
    <property type="evidence" value="ECO:0007669"/>
    <property type="project" value="TreeGrafter"/>
</dbReference>
<dbReference type="GO" id="GO:0000287">
    <property type="term" value="F:magnesium ion binding"/>
    <property type="evidence" value="ECO:0007669"/>
    <property type="project" value="UniProtKB-UniRule"/>
</dbReference>
<dbReference type="GO" id="GO:0008966">
    <property type="term" value="F:phosphoglucosamine mutase activity"/>
    <property type="evidence" value="ECO:0007669"/>
    <property type="project" value="UniProtKB-UniRule"/>
</dbReference>
<dbReference type="GO" id="GO:0004615">
    <property type="term" value="F:phosphomannomutase activity"/>
    <property type="evidence" value="ECO:0007669"/>
    <property type="project" value="TreeGrafter"/>
</dbReference>
<dbReference type="GO" id="GO:0005975">
    <property type="term" value="P:carbohydrate metabolic process"/>
    <property type="evidence" value="ECO:0007669"/>
    <property type="project" value="InterPro"/>
</dbReference>
<dbReference type="GO" id="GO:0009252">
    <property type="term" value="P:peptidoglycan biosynthetic process"/>
    <property type="evidence" value="ECO:0007669"/>
    <property type="project" value="TreeGrafter"/>
</dbReference>
<dbReference type="GO" id="GO:0006048">
    <property type="term" value="P:UDP-N-acetylglucosamine biosynthetic process"/>
    <property type="evidence" value="ECO:0007669"/>
    <property type="project" value="TreeGrafter"/>
</dbReference>
<dbReference type="CDD" id="cd05802">
    <property type="entry name" value="GlmM"/>
    <property type="match status" value="1"/>
</dbReference>
<dbReference type="FunFam" id="3.30.310.50:FF:000001">
    <property type="entry name" value="Phosphoglucosamine mutase"/>
    <property type="match status" value="1"/>
</dbReference>
<dbReference type="FunFam" id="3.40.120.10:FF:000001">
    <property type="entry name" value="Phosphoglucosamine mutase"/>
    <property type="match status" value="1"/>
</dbReference>
<dbReference type="FunFam" id="3.40.120.10:FF:000002">
    <property type="entry name" value="Phosphoglucosamine mutase"/>
    <property type="match status" value="1"/>
</dbReference>
<dbReference type="Gene3D" id="3.40.120.10">
    <property type="entry name" value="Alpha-D-Glucose-1,6-Bisphosphate, subunit A, domain 3"/>
    <property type="match status" value="3"/>
</dbReference>
<dbReference type="Gene3D" id="3.30.310.50">
    <property type="entry name" value="Alpha-D-phosphohexomutase, C-terminal domain"/>
    <property type="match status" value="1"/>
</dbReference>
<dbReference type="HAMAP" id="MF_01554_B">
    <property type="entry name" value="GlmM_B"/>
    <property type="match status" value="1"/>
</dbReference>
<dbReference type="InterPro" id="IPR005844">
    <property type="entry name" value="A-D-PHexomutase_a/b/a-I"/>
</dbReference>
<dbReference type="InterPro" id="IPR016055">
    <property type="entry name" value="A-D-PHexomutase_a/b/a-I/II/III"/>
</dbReference>
<dbReference type="InterPro" id="IPR005845">
    <property type="entry name" value="A-D-PHexomutase_a/b/a-II"/>
</dbReference>
<dbReference type="InterPro" id="IPR005846">
    <property type="entry name" value="A-D-PHexomutase_a/b/a-III"/>
</dbReference>
<dbReference type="InterPro" id="IPR005843">
    <property type="entry name" value="A-D-PHexomutase_C"/>
</dbReference>
<dbReference type="InterPro" id="IPR036900">
    <property type="entry name" value="A-D-PHexomutase_C_sf"/>
</dbReference>
<dbReference type="InterPro" id="IPR016066">
    <property type="entry name" value="A-D-PHexomutase_CS"/>
</dbReference>
<dbReference type="InterPro" id="IPR005841">
    <property type="entry name" value="Alpha-D-phosphohexomutase_SF"/>
</dbReference>
<dbReference type="InterPro" id="IPR006352">
    <property type="entry name" value="GlmM_bact"/>
</dbReference>
<dbReference type="InterPro" id="IPR050060">
    <property type="entry name" value="Phosphoglucosamine_mutase"/>
</dbReference>
<dbReference type="NCBIfam" id="TIGR01455">
    <property type="entry name" value="glmM"/>
    <property type="match status" value="1"/>
</dbReference>
<dbReference type="NCBIfam" id="NF008139">
    <property type="entry name" value="PRK10887.1"/>
    <property type="match status" value="1"/>
</dbReference>
<dbReference type="PANTHER" id="PTHR42946:SF1">
    <property type="entry name" value="PHOSPHOGLUCOMUTASE (ALPHA-D-GLUCOSE-1,6-BISPHOSPHATE-DEPENDENT)"/>
    <property type="match status" value="1"/>
</dbReference>
<dbReference type="PANTHER" id="PTHR42946">
    <property type="entry name" value="PHOSPHOHEXOSE MUTASE"/>
    <property type="match status" value="1"/>
</dbReference>
<dbReference type="Pfam" id="PF02878">
    <property type="entry name" value="PGM_PMM_I"/>
    <property type="match status" value="1"/>
</dbReference>
<dbReference type="Pfam" id="PF02879">
    <property type="entry name" value="PGM_PMM_II"/>
    <property type="match status" value="1"/>
</dbReference>
<dbReference type="Pfam" id="PF02880">
    <property type="entry name" value="PGM_PMM_III"/>
    <property type="match status" value="1"/>
</dbReference>
<dbReference type="Pfam" id="PF00408">
    <property type="entry name" value="PGM_PMM_IV"/>
    <property type="match status" value="1"/>
</dbReference>
<dbReference type="PRINTS" id="PR00509">
    <property type="entry name" value="PGMPMM"/>
</dbReference>
<dbReference type="SUPFAM" id="SSF55957">
    <property type="entry name" value="Phosphoglucomutase, C-terminal domain"/>
    <property type="match status" value="1"/>
</dbReference>
<dbReference type="SUPFAM" id="SSF53738">
    <property type="entry name" value="Phosphoglucomutase, first 3 domains"/>
    <property type="match status" value="3"/>
</dbReference>
<dbReference type="PROSITE" id="PS00710">
    <property type="entry name" value="PGM_PMM"/>
    <property type="match status" value="1"/>
</dbReference>
<sequence length="445" mass="47544">MSNRKYFGTDGIRGRVGDAPITPDFVLKLGWAAGKVLARHGSRKIIIGKDTRISGYMLESALEAGLAAAGLSALFTGPMPTPAVAYLTRTFRAEAGIVISASHNPFYDNGIKFFSIDGTKLPDAVEEAIEAEMEKEISCVDSAELGKASRIVDAAGRYIEFCKATFPNELSLSELKIVVDCANGATYHIAPNVLRELGANVIAIGCEPNGVNINAEVGATDVRALQARVLAEKADLGIAFDGDGDRVIMVDHEGNKVDGDQIMYIIAREGLRQGQLRGGAVGTLMSNMGLELALKQLGIPFARAKVGDRYVLEKMQEKGWRIGAENSGHVILLDKTTTGDGIVAGLQVLAAMARNHMSLHDLCSGMKMFPQILVNVRYTAGSGDPLEHESVKAVTAEVEAALGNRGRVLLRKSGTEPLIRVMVEGEDEAQVTEFAHRIADAVKAV</sequence>
<name>GLMM_ECOLC</name>
<organism>
    <name type="scientific">Escherichia coli (strain ATCC 8739 / DSM 1576 / NBRC 3972 / NCIMB 8545 / WDCM 00012 / Crooks)</name>
    <dbReference type="NCBI Taxonomy" id="481805"/>
    <lineage>
        <taxon>Bacteria</taxon>
        <taxon>Pseudomonadati</taxon>
        <taxon>Pseudomonadota</taxon>
        <taxon>Gammaproteobacteria</taxon>
        <taxon>Enterobacterales</taxon>
        <taxon>Enterobacteriaceae</taxon>
        <taxon>Escherichia</taxon>
    </lineage>
</organism>